<evidence type="ECO:0000250" key="1"/>
<evidence type="ECO:0000305" key="2"/>
<evidence type="ECO:0007829" key="3">
    <source>
        <dbReference type="PDB" id="1WLG"/>
    </source>
</evidence>
<evidence type="ECO:0007829" key="4">
    <source>
        <dbReference type="PDB" id="6K9Q"/>
    </source>
</evidence>
<gene>
    <name type="primary">flgE</name>
    <name type="synonym">fla FV</name>
    <name type="synonym">flaK</name>
    <name type="ordered locus">STM1177</name>
</gene>
<name>FLGE_SALTY</name>
<dbReference type="EMBL" id="X51737">
    <property type="protein sequence ID" value="CAA36022.1"/>
    <property type="molecule type" value="Genomic_DNA"/>
</dbReference>
<dbReference type="EMBL" id="AE006468">
    <property type="protein sequence ID" value="AAL20107.1"/>
    <property type="molecule type" value="Genomic_DNA"/>
</dbReference>
<dbReference type="PIR" id="S10365">
    <property type="entry name" value="S10365"/>
</dbReference>
<dbReference type="RefSeq" id="NP_460148.1">
    <property type="nucleotide sequence ID" value="NC_003197.2"/>
</dbReference>
<dbReference type="RefSeq" id="WP_000010567.1">
    <property type="nucleotide sequence ID" value="NC_003197.2"/>
</dbReference>
<dbReference type="PDB" id="1WLG">
    <property type="method" value="X-ray"/>
    <property type="resolution" value="1.80 A"/>
    <property type="chains" value="A/B=72-370"/>
</dbReference>
<dbReference type="PDB" id="2BGY">
    <property type="method" value="EM"/>
    <property type="resolution" value="20.00 A"/>
    <property type="chains" value="A=72-370"/>
</dbReference>
<dbReference type="PDB" id="2BGZ">
    <property type="method" value="EM"/>
    <property type="resolution" value="12.00 A"/>
    <property type="chains" value="A=72-370"/>
</dbReference>
<dbReference type="PDB" id="3A69">
    <property type="method" value="EM"/>
    <property type="chains" value="A=2-403"/>
</dbReference>
<dbReference type="PDB" id="6JZT">
    <property type="method" value="EM"/>
    <property type="resolution" value="7.10 A"/>
    <property type="chains" value="A/B/C/D/E/F/G/H/I/J/K/a/b/c/d/e/f/g/h/i/j/k=1-403"/>
</dbReference>
<dbReference type="PDB" id="6K3I">
    <property type="method" value="EM"/>
    <property type="resolution" value="2.86 A"/>
    <property type="chains" value="AA/AB/AC/AD/AE/AF/AG/AH/AI/AJ/AK/BA/BB/BC/BD/BE/BF/BG/BH/BI/BJ/BK/CA/CB/CC/CD/CE/CF/CG/CH=2-403"/>
</dbReference>
<dbReference type="PDB" id="6K9Q">
    <property type="method" value="EM"/>
    <property type="resolution" value="3.10 A"/>
    <property type="chains" value="A/B/C/D/E/F/G/H/I/J/K/L/M/N/O/P/Q/R/S/T/U/V/W/X/Y/Z=2-403"/>
</dbReference>
<dbReference type="PDB" id="6KFK">
    <property type="method" value="EM"/>
    <property type="resolution" value="4.10 A"/>
    <property type="chains" value="A=2-403"/>
</dbReference>
<dbReference type="PDB" id="7CBM">
    <property type="method" value="EM"/>
    <property type="resolution" value="3.20 A"/>
    <property type="chains" value="DA/DB/DC/DD/DE/DF/DG/DH/DI/DJ/DK=1-403"/>
</dbReference>
<dbReference type="PDB" id="7CGB">
    <property type="method" value="EM"/>
    <property type="resolution" value="3.40 A"/>
    <property type="chains" value="DL/DM/DN/DO/DP/DQ/DR/DS/DT/DU/DV/DW/DX/DY/DZ/EA/EB/EC/ED/EE/EF/EG=1-403"/>
</dbReference>
<dbReference type="PDB" id="7CGO">
    <property type="method" value="EM"/>
    <property type="resolution" value="3.90 A"/>
    <property type="chains" value="DA/DB/DC/DD/DE/DF/DG/DH/DI/DJ/DK/DL/DM/DN/DO/DP/DQ/DR/DS/DT/DU/DV/DW/DX/DY/DZ/EA/EB/EC/ED=1-403"/>
</dbReference>
<dbReference type="PDB" id="7E80">
    <property type="method" value="EM"/>
    <property type="resolution" value="3.67 A"/>
    <property type="chains" value="DA/DB/DC/DD/DE/DF/DG/DH/DI/DJ/DK=1-403"/>
</dbReference>
<dbReference type="PDB" id="7E82">
    <property type="method" value="EM"/>
    <property type="resolution" value="3.30 A"/>
    <property type="chains" value="DA/DB/DC/DD/DE/DF/DG/DH/DI/DJ/DK=1-403"/>
</dbReference>
<dbReference type="PDB" id="8WKI">
    <property type="method" value="EM"/>
    <property type="resolution" value="3.30 A"/>
    <property type="chains" value="ZF/ZG/ZH/ZI/ZJ/ZK/ZL/ZM/ZN/ZO/ZP/ZQ/ZR/ZS/ZT/ZU/ZV/ZW/ZX/ZY/ZZ/Za/Zb/Zc/Zd/Ze/Zf/Zg/Zh=1-403"/>
</dbReference>
<dbReference type="PDB" id="8WKK">
    <property type="method" value="EM"/>
    <property type="resolution" value="3.30 A"/>
    <property type="chains" value="ZF/ZG/ZH/ZI/ZJ/ZK/ZL/ZM/ZN/ZO/ZP/ZQ/ZR/ZS/ZT/ZU/ZV/ZW/ZX/ZY/ZZ/Za/Zb/Zc/Zd/Ze/Zf/Zg/Zh=1-403"/>
</dbReference>
<dbReference type="PDB" id="8WL2">
    <property type="method" value="EM"/>
    <property type="resolution" value="3.40 A"/>
    <property type="chains" value="ZF/ZG/ZH/ZI/ZJ/ZK/ZL/ZM/ZN/ZO/ZP/ZQ/ZR/ZS/ZT/ZU/ZV/ZW/ZX/ZY/ZZ/Za/Zb/Zc/Zd/Ze/Zf/Zg/Zh=1-403"/>
</dbReference>
<dbReference type="PDB" id="8WLP">
    <property type="method" value="EM"/>
    <property type="resolution" value="3.80 A"/>
    <property type="chains" value="ZF/ZG/ZH/ZI/ZJ/ZK/ZL/ZM/ZN/ZO/ZP/ZQ/ZR/ZS/ZT/ZU/ZV/ZW/ZX/ZY/ZZ/Za/Zb/Zc/Zd/Ze/Zf/Zg/Zh=1-403"/>
</dbReference>
<dbReference type="PDB" id="8WLQ">
    <property type="method" value="EM"/>
    <property type="resolution" value="3.80 A"/>
    <property type="chains" value="ZF/ZG/ZH/ZI/ZJ/ZK/ZL/ZM/ZN/ZO/ZP/ZQ/ZR/ZS/ZT/ZU/ZV/ZW/ZX/ZY/ZZ/Za/Zb/Zc/Zd/Ze/Zf/Zg/Zh=1-403"/>
</dbReference>
<dbReference type="PDB" id="8WLT">
    <property type="method" value="EM"/>
    <property type="resolution" value="4.10 A"/>
    <property type="chains" value="ZF/ZG/ZH/ZI/ZJ/ZK/ZL/ZM/ZN/ZO/ZP/ZQ/ZR/ZS/ZT/ZU/ZV/ZW/ZX/ZY/ZZ/Za/Zb/Zc/Zd/Ze/Zf/Zg/Zh=1-403"/>
</dbReference>
<dbReference type="PDB" id="8WO5">
    <property type="method" value="EM"/>
    <property type="resolution" value="7.40 A"/>
    <property type="chains" value="ZF/ZG/ZH/ZI/ZJ/ZK/ZL/ZM/ZN/ZO/ZP/ZQ/ZR/ZS/ZT/ZU/ZV/ZW/ZX/ZY/ZZ/Za/Zb/Zc/Zd/Ze/Zf/Zg/Zh=1-403"/>
</dbReference>
<dbReference type="PDB" id="8WOE">
    <property type="method" value="EM"/>
    <property type="resolution" value="4.30 A"/>
    <property type="chains" value="ZF/ZG/ZH/ZI/ZJ/ZK/ZL/ZM/ZN/ZO/ZP/ZQ/ZR/ZS/ZT/ZU/ZV/ZW/ZX/ZY/ZZ/Za/Zb/Zc/Zd/Ze/Zf/Zg/Zh=1-403"/>
</dbReference>
<dbReference type="PDBsum" id="1WLG"/>
<dbReference type="PDBsum" id="2BGY"/>
<dbReference type="PDBsum" id="2BGZ"/>
<dbReference type="PDBsum" id="3A69"/>
<dbReference type="PDBsum" id="6JZT"/>
<dbReference type="PDBsum" id="6K3I"/>
<dbReference type="PDBsum" id="6K9Q"/>
<dbReference type="PDBsum" id="6KFK"/>
<dbReference type="PDBsum" id="7CBM"/>
<dbReference type="PDBsum" id="7CGB"/>
<dbReference type="PDBsum" id="7CGO"/>
<dbReference type="PDBsum" id="7E80"/>
<dbReference type="PDBsum" id="7E82"/>
<dbReference type="PDBsum" id="8WKI"/>
<dbReference type="PDBsum" id="8WKK"/>
<dbReference type="PDBsum" id="8WL2"/>
<dbReference type="PDBsum" id="8WLP"/>
<dbReference type="PDBsum" id="8WLQ"/>
<dbReference type="PDBsum" id="8WLT"/>
<dbReference type="PDBsum" id="8WO5"/>
<dbReference type="PDBsum" id="8WOE"/>
<dbReference type="EMDB" id="EMD-1132"/>
<dbReference type="EMDB" id="EMD-30336"/>
<dbReference type="EMDB" id="EMD-30354"/>
<dbReference type="EMDB" id="EMD-30359"/>
<dbReference type="EMDB" id="EMD-31006"/>
<dbReference type="EMDB" id="EMD-31008"/>
<dbReference type="EMDB" id="EMD-37600"/>
<dbReference type="EMDB" id="EMD-37601"/>
<dbReference type="EMDB" id="EMD-37611"/>
<dbReference type="EMDB" id="EMD-37627"/>
<dbReference type="EMDB" id="EMD-37628"/>
<dbReference type="EMDB" id="EMD-37630"/>
<dbReference type="EMDB" id="EMD-37679"/>
<dbReference type="EMDB" id="EMD-37684"/>
<dbReference type="EMDB" id="EMD-9909"/>
<dbReference type="SMR" id="P0A1J1"/>
<dbReference type="IntAct" id="P0A1J1">
    <property type="interactions" value="1"/>
</dbReference>
<dbReference type="STRING" id="99287.STM1177"/>
<dbReference type="PaxDb" id="99287-STM1177"/>
<dbReference type="GeneID" id="1252695"/>
<dbReference type="KEGG" id="stm:STM1177"/>
<dbReference type="PATRIC" id="fig|99287.12.peg.1245"/>
<dbReference type="HOGENOM" id="CLU_013687_2_0_6"/>
<dbReference type="OMA" id="QTRMDVV"/>
<dbReference type="PhylomeDB" id="P0A1J1"/>
<dbReference type="BioCyc" id="SENT99287:STM1177-MONOMER"/>
<dbReference type="EvolutionaryTrace" id="P0A1J1"/>
<dbReference type="Proteomes" id="UP000001014">
    <property type="component" value="Chromosome"/>
</dbReference>
<dbReference type="GO" id="GO:0009288">
    <property type="term" value="C:bacterial-type flagellum"/>
    <property type="evidence" value="ECO:0000318"/>
    <property type="project" value="GO_Central"/>
</dbReference>
<dbReference type="GO" id="GO:0009425">
    <property type="term" value="C:bacterial-type flagellum basal body"/>
    <property type="evidence" value="ECO:0007669"/>
    <property type="project" value="UniProtKB-SubCell"/>
</dbReference>
<dbReference type="GO" id="GO:0009424">
    <property type="term" value="C:bacterial-type flagellum hook"/>
    <property type="evidence" value="ECO:0000318"/>
    <property type="project" value="GO_Central"/>
</dbReference>
<dbReference type="GO" id="GO:0005829">
    <property type="term" value="C:cytosol"/>
    <property type="evidence" value="ECO:0000318"/>
    <property type="project" value="GO_Central"/>
</dbReference>
<dbReference type="GO" id="GO:0071978">
    <property type="term" value="P:bacterial-type flagellum-dependent swarming motility"/>
    <property type="evidence" value="ECO:0000318"/>
    <property type="project" value="GO_Central"/>
</dbReference>
<dbReference type="FunFam" id="2.60.98.20:FF:000001">
    <property type="entry name" value="Flagellar hook protein FlgE"/>
    <property type="match status" value="1"/>
</dbReference>
<dbReference type="Gene3D" id="2.60.98.20">
    <property type="entry name" value="Flagellar hook protein FlgE"/>
    <property type="match status" value="1"/>
</dbReference>
<dbReference type="InterPro" id="IPR037058">
    <property type="entry name" value="Falgellar_hook_FlgE_sf"/>
</dbReference>
<dbReference type="InterPro" id="IPR001444">
    <property type="entry name" value="Flag_bb_rod_N"/>
</dbReference>
<dbReference type="InterPro" id="IPR019776">
    <property type="entry name" value="Flagellar_basal_body_rod_CS"/>
</dbReference>
<dbReference type="InterPro" id="IPR020013">
    <property type="entry name" value="Flagellar_FlgE/F/G"/>
</dbReference>
<dbReference type="InterPro" id="IPR010930">
    <property type="entry name" value="Flg_bb/hook_C_dom"/>
</dbReference>
<dbReference type="InterPro" id="IPR037925">
    <property type="entry name" value="FlgE/F/G-like"/>
</dbReference>
<dbReference type="InterPro" id="IPR011491">
    <property type="entry name" value="FlgE_D2"/>
</dbReference>
<dbReference type="InterPro" id="IPR053967">
    <property type="entry name" value="LlgE_F_G-like_D1"/>
</dbReference>
<dbReference type="NCBIfam" id="TIGR03506">
    <property type="entry name" value="FlgEFG_subfam"/>
    <property type="match status" value="1"/>
</dbReference>
<dbReference type="NCBIfam" id="NF004238">
    <property type="entry name" value="PRK05682.1-1"/>
    <property type="match status" value="1"/>
</dbReference>
<dbReference type="PANTHER" id="PTHR30435:SF1">
    <property type="entry name" value="FLAGELLAR HOOK PROTEIN FLGE"/>
    <property type="match status" value="1"/>
</dbReference>
<dbReference type="PANTHER" id="PTHR30435">
    <property type="entry name" value="FLAGELLAR PROTEIN"/>
    <property type="match status" value="1"/>
</dbReference>
<dbReference type="Pfam" id="PF00460">
    <property type="entry name" value="Flg_bb_rod"/>
    <property type="match status" value="1"/>
</dbReference>
<dbReference type="Pfam" id="PF06429">
    <property type="entry name" value="Flg_bbr_C"/>
    <property type="match status" value="1"/>
</dbReference>
<dbReference type="Pfam" id="PF07559">
    <property type="entry name" value="FlgE_D2"/>
    <property type="match status" value="1"/>
</dbReference>
<dbReference type="Pfam" id="PF22692">
    <property type="entry name" value="LlgE_F_G_D1"/>
    <property type="match status" value="1"/>
</dbReference>
<dbReference type="SUPFAM" id="SSF117143">
    <property type="entry name" value="Flagellar hook protein flgE"/>
    <property type="match status" value="1"/>
</dbReference>
<dbReference type="PROSITE" id="PS00588">
    <property type="entry name" value="FLAGELLA_BB_ROD"/>
    <property type="match status" value="1"/>
</dbReference>
<comment type="interaction">
    <interactant intactId="EBI-6408688">
        <id>P0A1J1</id>
    </interactant>
    <interactant intactId="EBI-6408664">
        <id>P26416</id>
        <label>fliK</label>
    </interactant>
    <organismsDiffer>false</organismsDiffer>
    <experiments>2</experiments>
</comment>
<comment type="subcellular location">
    <subcellularLocation>
        <location evidence="1">Bacterial flagellum basal body</location>
    </subcellularLocation>
</comment>
<comment type="similarity">
    <text evidence="2">Belongs to the flagella basal body rod proteins family.</text>
</comment>
<organism>
    <name type="scientific">Salmonella typhimurium (strain LT2 / SGSC1412 / ATCC 700720)</name>
    <dbReference type="NCBI Taxonomy" id="99287"/>
    <lineage>
        <taxon>Bacteria</taxon>
        <taxon>Pseudomonadati</taxon>
        <taxon>Pseudomonadota</taxon>
        <taxon>Gammaproteobacteria</taxon>
        <taxon>Enterobacterales</taxon>
        <taxon>Enterobacteriaceae</taxon>
        <taxon>Salmonella</taxon>
    </lineage>
</organism>
<reference key="1">
    <citation type="journal article" date="1990" name="J. Mol. Biol.">
        <title>Flagellar hook and hook-associated proteins of Salmonella typhimurium and their relationship to other axial components of the flagellum.</title>
        <authorList>
            <person name="Homma M."/>
            <person name="Derosier D.J."/>
            <person name="Macnab R.M."/>
        </authorList>
    </citation>
    <scope>NUCLEOTIDE SEQUENCE [GENOMIC DNA]</scope>
</reference>
<reference key="2">
    <citation type="journal article" date="2001" name="Nature">
        <title>Complete genome sequence of Salmonella enterica serovar Typhimurium LT2.</title>
        <authorList>
            <person name="McClelland M."/>
            <person name="Sanderson K.E."/>
            <person name="Spieth J."/>
            <person name="Clifton S.W."/>
            <person name="Latreille P."/>
            <person name="Courtney L."/>
            <person name="Porwollik S."/>
            <person name="Ali J."/>
            <person name="Dante M."/>
            <person name="Du F."/>
            <person name="Hou S."/>
            <person name="Layman D."/>
            <person name="Leonard S."/>
            <person name="Nguyen C."/>
            <person name="Scott K."/>
            <person name="Holmes A."/>
            <person name="Grewal N."/>
            <person name="Mulvaney E."/>
            <person name="Ryan E."/>
            <person name="Sun H."/>
            <person name="Florea L."/>
            <person name="Miller W."/>
            <person name="Stoneking T."/>
            <person name="Nhan M."/>
            <person name="Waterston R."/>
            <person name="Wilson R.K."/>
        </authorList>
    </citation>
    <scope>NUCLEOTIDE SEQUENCE [LARGE SCALE GENOMIC DNA]</scope>
    <source>
        <strain>LT2 / SGSC1412 / ATCC 700720</strain>
    </source>
</reference>
<proteinExistence type="evidence at protein level"/>
<feature type="initiator methionine" description="Removed" evidence="1">
    <location>
        <position position="1"/>
    </location>
</feature>
<feature type="chain" id="PRO_0000180827" description="Flagellar hook protein FlgE">
    <location>
        <begin position="2"/>
        <end position="403"/>
    </location>
</feature>
<feature type="helix" evidence="4">
    <location>
        <begin position="4"/>
        <end position="25"/>
    </location>
</feature>
<feature type="turn" evidence="4">
    <location>
        <begin position="26"/>
        <end position="28"/>
    </location>
</feature>
<feature type="strand" evidence="4">
    <location>
        <begin position="36"/>
        <end position="41"/>
    </location>
</feature>
<feature type="strand" evidence="4">
    <location>
        <begin position="45"/>
        <end position="48"/>
    </location>
</feature>
<feature type="strand" evidence="4">
    <location>
        <begin position="52"/>
        <end position="58"/>
    </location>
</feature>
<feature type="strand" evidence="3">
    <location>
        <begin position="78"/>
        <end position="80"/>
    </location>
</feature>
<feature type="strand" evidence="3">
    <location>
        <begin position="82"/>
        <end position="86"/>
    </location>
</feature>
<feature type="strand" evidence="4">
    <location>
        <begin position="88"/>
        <end position="90"/>
    </location>
</feature>
<feature type="strand" evidence="3">
    <location>
        <begin position="92"/>
        <end position="96"/>
    </location>
</feature>
<feature type="strand" evidence="3">
    <location>
        <begin position="99"/>
        <end position="102"/>
    </location>
</feature>
<feature type="strand" evidence="4">
    <location>
        <begin position="107"/>
        <end position="113"/>
    </location>
</feature>
<feature type="strand" evidence="3">
    <location>
        <begin position="115"/>
        <end position="120"/>
    </location>
</feature>
<feature type="turn" evidence="3">
    <location>
        <begin position="123"/>
        <end position="126"/>
    </location>
</feature>
<feature type="strand" evidence="3">
    <location>
        <begin position="151"/>
        <end position="159"/>
    </location>
</feature>
<feature type="strand" evidence="4">
    <location>
        <begin position="175"/>
        <end position="177"/>
    </location>
</feature>
<feature type="strand" evidence="3">
    <location>
        <begin position="179"/>
        <end position="187"/>
    </location>
</feature>
<feature type="strand" evidence="3">
    <location>
        <begin position="193"/>
        <end position="204"/>
    </location>
</feature>
<feature type="strand" evidence="3">
    <location>
        <begin position="207"/>
        <end position="214"/>
    </location>
</feature>
<feature type="strand" evidence="3">
    <location>
        <begin position="227"/>
        <end position="232"/>
    </location>
</feature>
<feature type="strand" evidence="3">
    <location>
        <begin position="236"/>
        <end position="240"/>
    </location>
</feature>
<feature type="strand" evidence="3">
    <location>
        <begin position="243"/>
        <end position="247"/>
    </location>
</feature>
<feature type="strand" evidence="3">
    <location>
        <begin position="258"/>
        <end position="262"/>
    </location>
</feature>
<feature type="strand" evidence="3">
    <location>
        <begin position="267"/>
        <end position="271"/>
    </location>
</feature>
<feature type="strand" evidence="3">
    <location>
        <begin position="275"/>
        <end position="281"/>
    </location>
</feature>
<feature type="strand" evidence="3">
    <location>
        <begin position="289"/>
        <end position="294"/>
    </location>
</feature>
<feature type="strand" evidence="3">
    <location>
        <begin position="299"/>
        <end position="304"/>
    </location>
</feature>
<feature type="turn" evidence="4">
    <location>
        <begin position="305"/>
        <end position="307"/>
    </location>
</feature>
<feature type="strand" evidence="3">
    <location>
        <begin position="309"/>
        <end position="315"/>
    </location>
</feature>
<feature type="strand" evidence="3">
    <location>
        <begin position="317"/>
        <end position="319"/>
    </location>
</feature>
<feature type="helix" evidence="3">
    <location>
        <begin position="323"/>
        <end position="325"/>
    </location>
</feature>
<feature type="strand" evidence="3">
    <location>
        <begin position="326"/>
        <end position="328"/>
    </location>
</feature>
<feature type="strand" evidence="4">
    <location>
        <begin position="330"/>
        <end position="332"/>
    </location>
</feature>
<feature type="turn" evidence="3">
    <location>
        <begin position="338"/>
        <end position="340"/>
    </location>
</feature>
<feature type="strand" evidence="3">
    <location>
        <begin position="344"/>
        <end position="346"/>
    </location>
</feature>
<feature type="strand" evidence="4">
    <location>
        <begin position="350"/>
        <end position="352"/>
    </location>
</feature>
<feature type="strand" evidence="4">
    <location>
        <begin position="357"/>
        <end position="359"/>
    </location>
</feature>
<feature type="strand" evidence="3">
    <location>
        <begin position="360"/>
        <end position="363"/>
    </location>
</feature>
<feature type="helix" evidence="4">
    <location>
        <begin position="368"/>
        <end position="400"/>
    </location>
</feature>
<keyword id="KW-0002">3D-structure</keyword>
<keyword id="KW-0975">Bacterial flagellum</keyword>
<keyword id="KW-1185">Reference proteome</keyword>
<accession>P0A1J1</accession>
<accession>P16322</accession>
<sequence>MSFSQAVSGLNAAATNLDVIGNNIANSATYGFKSGTASFADMFAGSKVGLGVKVAGITQDFTDGTTTNTGRGLDVAISQNGFFRLVDSNGSVFYSRNGQFKLDENRNLVNMQGMQLTGYPATGTPPTIQQGANPAPITIPNTLMAAKSTTTASMQINLNSTDPVPSKTPFSVSDADSYNKKGTVTVYDSQGNAHDMNVYFVKTKDNEWAVYTHDSSDPAATAPTTASTTLKFNENGILESGGTVNITTGTINGATAATFSLSFLNSMQQNTGANNIVATNQNGYKPGDLVSYQINNDGTVVGNYSNEQEQVLGQIVLANFANNEGLASQGDNVWAATQASGVALLGTAGSGNFGKLTNGALEASNVDLSKELVNMIVAQRNYQSNAQTIKTQDQILNTLVNLR</sequence>
<protein>
    <recommendedName>
        <fullName>Flagellar hook protein FlgE</fullName>
    </recommendedName>
</protein>